<protein>
    <recommendedName>
        <fullName>Guanine nucleotide-binding protein G(i) subunit alpha</fullName>
    </recommendedName>
    <alternativeName>
        <fullName>Adenylate cyclase-inhibiting G alpha protein</fullName>
    </alternativeName>
</protein>
<proteinExistence type="evidence at protein level"/>
<sequence length="354" mass="40043">MGCATSAEDKAAAERSKAIDRNLRIDGEKAAREVKLLLLGAGESGKSTIVKQMKIIHEEGYSEEDCKQYKPVVYSNTIQSMIAIIRAMGSLKVDFGDGDRTDDARQLFALAGQAEEGELSPELAAVMKRLWADGGVQGCFSRSREYQLNDSASYYLNALDRLAAPGYIPTQQDVLRTRVKTTGIVETHFTFKDLHFKMFDVGGQRSERKKWIHCFEGVTAIIFCVALSAYDLVLAEDEEMNRMHESMKLFDSICNNKWFTETSIILFLNKKDLFEEKITKSPLTICFPEYTGSNTYEEAAAYIQMQFEDLNKRKDQKEIYTHFTCATDTNNIQFVFDAVTDVIIKNNLKDCGLF</sequence>
<evidence type="ECO:0000250" key="1"/>
<evidence type="ECO:0000255" key="2"/>
<evidence type="ECO:0000255" key="3">
    <source>
        <dbReference type="PROSITE-ProRule" id="PRU01230"/>
    </source>
</evidence>
<evidence type="ECO:0000305" key="4"/>
<feature type="initiator methionine" description="Removed" evidence="1">
    <location>
        <position position="1"/>
    </location>
</feature>
<feature type="chain" id="PRO_0000203685" description="Guanine nucleotide-binding protein G(i) subunit alpha">
    <location>
        <begin position="2"/>
        <end position="354"/>
    </location>
</feature>
<feature type="domain" description="G-alpha" evidence="3">
    <location>
        <begin position="32"/>
        <end position="354"/>
    </location>
</feature>
<feature type="region of interest" description="G1 motif" evidence="3">
    <location>
        <begin position="35"/>
        <end position="48"/>
    </location>
</feature>
<feature type="region of interest" description="G2 motif" evidence="3">
    <location>
        <begin position="173"/>
        <end position="181"/>
    </location>
</feature>
<feature type="region of interest" description="G3 motif" evidence="3">
    <location>
        <begin position="196"/>
        <end position="205"/>
    </location>
</feature>
<feature type="region of interest" description="G4 motif" evidence="3">
    <location>
        <begin position="265"/>
        <end position="272"/>
    </location>
</feature>
<feature type="region of interest" description="G5 motif" evidence="3">
    <location>
        <begin position="324"/>
        <end position="329"/>
    </location>
</feature>
<feature type="binding site" evidence="1">
    <location>
        <begin position="40"/>
        <end position="47"/>
    </location>
    <ligand>
        <name>GTP</name>
        <dbReference type="ChEBI" id="CHEBI:37565"/>
    </ligand>
</feature>
<feature type="binding site" evidence="1">
    <location>
        <position position="47"/>
    </location>
    <ligand>
        <name>Mg(2+)</name>
        <dbReference type="ChEBI" id="CHEBI:18420"/>
    </ligand>
</feature>
<feature type="binding site" evidence="1">
    <location>
        <begin position="175"/>
        <end position="181"/>
    </location>
    <ligand>
        <name>GTP</name>
        <dbReference type="ChEBI" id="CHEBI:37565"/>
    </ligand>
</feature>
<feature type="binding site" evidence="1">
    <location>
        <position position="181"/>
    </location>
    <ligand>
        <name>Mg(2+)</name>
        <dbReference type="ChEBI" id="CHEBI:18420"/>
    </ligand>
</feature>
<feature type="binding site" evidence="1">
    <location>
        <begin position="200"/>
        <end position="204"/>
    </location>
    <ligand>
        <name>GTP</name>
        <dbReference type="ChEBI" id="CHEBI:37565"/>
    </ligand>
</feature>
<feature type="binding site" evidence="1">
    <location>
        <begin position="269"/>
        <end position="272"/>
    </location>
    <ligand>
        <name>GTP</name>
        <dbReference type="ChEBI" id="CHEBI:37565"/>
    </ligand>
</feature>
<feature type="binding site" evidence="1">
    <location>
        <position position="326"/>
    </location>
    <ligand>
        <name>GTP</name>
        <dbReference type="ChEBI" id="CHEBI:37565"/>
    </ligand>
</feature>
<feature type="lipid moiety-binding region" description="N-myristoyl glycine" evidence="2">
    <location>
        <position position="2"/>
    </location>
</feature>
<feature type="lipid moiety-binding region" description="S-palmitoyl cysteine" evidence="2">
    <location>
        <position position="3"/>
    </location>
</feature>
<keyword id="KW-0903">Direct protein sequencing</keyword>
<keyword id="KW-0342">GTP-binding</keyword>
<keyword id="KW-0449">Lipoprotein</keyword>
<keyword id="KW-0460">Magnesium</keyword>
<keyword id="KW-0479">Metal-binding</keyword>
<keyword id="KW-0519">Myristate</keyword>
<keyword id="KW-0547">Nucleotide-binding</keyword>
<keyword id="KW-0564">Palmitate</keyword>
<keyword id="KW-0807">Transducer</keyword>
<organism>
    <name type="scientific">Patiria pectinifera</name>
    <name type="common">Starfish</name>
    <name type="synonym">Asterina pectinifera</name>
    <dbReference type="NCBI Taxonomy" id="7594"/>
    <lineage>
        <taxon>Eukaryota</taxon>
        <taxon>Metazoa</taxon>
        <taxon>Echinodermata</taxon>
        <taxon>Eleutherozoa</taxon>
        <taxon>Asterozoa</taxon>
        <taxon>Asteroidea</taxon>
        <taxon>Valvatacea</taxon>
        <taxon>Valvatida</taxon>
        <taxon>Asterinidae</taxon>
        <taxon>Patiria</taxon>
    </lineage>
</organism>
<comment type="function">
    <text>Guanine nucleotide-binding proteins (G proteins) are involved as modulators or transducers in various transmembrane signaling systems. This G protein is involved in 1-methyladenine-induced oocyte maturation.</text>
</comment>
<comment type="subunit">
    <text>G proteins are composed of 3 units; alpha, beta and gamma. The alpha chain contains the guanine nucleotide binding site.</text>
</comment>
<comment type="similarity">
    <text evidence="4">Belongs to the G-alpha family. G(i/o/t/z) subfamily.</text>
</comment>
<dbReference type="EMBL" id="X66378">
    <property type="protein sequence ID" value="CAA47019.1"/>
    <property type="molecule type" value="mRNA"/>
</dbReference>
<dbReference type="PIR" id="S24362">
    <property type="entry name" value="S24362"/>
</dbReference>
<dbReference type="SMR" id="P30676"/>
<dbReference type="GO" id="GO:0005737">
    <property type="term" value="C:cytoplasm"/>
    <property type="evidence" value="ECO:0007669"/>
    <property type="project" value="TreeGrafter"/>
</dbReference>
<dbReference type="GO" id="GO:0005834">
    <property type="term" value="C:heterotrimeric G-protein complex"/>
    <property type="evidence" value="ECO:0007669"/>
    <property type="project" value="TreeGrafter"/>
</dbReference>
<dbReference type="GO" id="GO:0001664">
    <property type="term" value="F:G protein-coupled receptor binding"/>
    <property type="evidence" value="ECO:0007669"/>
    <property type="project" value="TreeGrafter"/>
</dbReference>
<dbReference type="GO" id="GO:0031683">
    <property type="term" value="F:G-protein beta/gamma-subunit complex binding"/>
    <property type="evidence" value="ECO:0007669"/>
    <property type="project" value="InterPro"/>
</dbReference>
<dbReference type="GO" id="GO:0005525">
    <property type="term" value="F:GTP binding"/>
    <property type="evidence" value="ECO:0007669"/>
    <property type="project" value="UniProtKB-KW"/>
</dbReference>
<dbReference type="GO" id="GO:0003924">
    <property type="term" value="F:GTPase activity"/>
    <property type="evidence" value="ECO:0007669"/>
    <property type="project" value="InterPro"/>
</dbReference>
<dbReference type="GO" id="GO:0046872">
    <property type="term" value="F:metal ion binding"/>
    <property type="evidence" value="ECO:0007669"/>
    <property type="project" value="UniProtKB-KW"/>
</dbReference>
<dbReference type="GO" id="GO:0007188">
    <property type="term" value="P:adenylate cyclase-modulating G protein-coupled receptor signaling pathway"/>
    <property type="evidence" value="ECO:0007669"/>
    <property type="project" value="InterPro"/>
</dbReference>
<dbReference type="CDD" id="cd00066">
    <property type="entry name" value="G-alpha"/>
    <property type="match status" value="1"/>
</dbReference>
<dbReference type="FunFam" id="1.10.400.10:FF:000001">
    <property type="entry name" value="Guanine nucleotide-binding protein G(I) subunit alpha"/>
    <property type="match status" value="1"/>
</dbReference>
<dbReference type="FunFam" id="3.40.50.300:FF:002487">
    <property type="entry name" value="Guanine nucleotide-binding protein G(i) subunit alpha-1"/>
    <property type="match status" value="1"/>
</dbReference>
<dbReference type="FunFam" id="3.40.50.300:FF:003559">
    <property type="entry name" value="Guanine nucleotide-binding protein G(i) subunit alpha-1"/>
    <property type="match status" value="1"/>
</dbReference>
<dbReference type="Gene3D" id="1.10.400.10">
    <property type="entry name" value="GI Alpha 1, domain 2-like"/>
    <property type="match status" value="1"/>
</dbReference>
<dbReference type="Gene3D" id="3.40.50.300">
    <property type="entry name" value="P-loop containing nucleotide triphosphate hydrolases"/>
    <property type="match status" value="1"/>
</dbReference>
<dbReference type="InterPro" id="IPR001408">
    <property type="entry name" value="Gprotein_alpha_I"/>
</dbReference>
<dbReference type="InterPro" id="IPR001019">
    <property type="entry name" value="Gprotein_alpha_su"/>
</dbReference>
<dbReference type="InterPro" id="IPR011025">
    <property type="entry name" value="GproteinA_insert"/>
</dbReference>
<dbReference type="InterPro" id="IPR027417">
    <property type="entry name" value="P-loop_NTPase"/>
</dbReference>
<dbReference type="PANTHER" id="PTHR10218:SF227">
    <property type="entry name" value="G PROTEIN ALPHA I SUBUNIT"/>
    <property type="match status" value="1"/>
</dbReference>
<dbReference type="PANTHER" id="PTHR10218">
    <property type="entry name" value="GTP-BINDING PROTEIN ALPHA SUBUNIT"/>
    <property type="match status" value="1"/>
</dbReference>
<dbReference type="Pfam" id="PF00503">
    <property type="entry name" value="G-alpha"/>
    <property type="match status" value="1"/>
</dbReference>
<dbReference type="PRINTS" id="PR00318">
    <property type="entry name" value="GPROTEINA"/>
</dbReference>
<dbReference type="PRINTS" id="PR00441">
    <property type="entry name" value="GPROTEINAI"/>
</dbReference>
<dbReference type="SMART" id="SM00275">
    <property type="entry name" value="G_alpha"/>
    <property type="match status" value="1"/>
</dbReference>
<dbReference type="SUPFAM" id="SSF52540">
    <property type="entry name" value="P-loop containing nucleoside triphosphate hydrolases"/>
    <property type="match status" value="1"/>
</dbReference>
<dbReference type="SUPFAM" id="SSF47895">
    <property type="entry name" value="Transducin (alpha subunit), insertion domain"/>
    <property type="match status" value="1"/>
</dbReference>
<dbReference type="PROSITE" id="PS51882">
    <property type="entry name" value="G_ALPHA"/>
    <property type="match status" value="1"/>
</dbReference>
<accession>P30676</accession>
<name>GNAI_PATPE</name>
<reference key="1">
    <citation type="journal article" date="1992" name="Eur. J. Biochem.">
        <title>The primary structure of the alpha subunit of a starfish guanosine-nucleotide-binding regulatory protein involved in 1-methyladenine-induced oocyte maturation.</title>
        <authorList>
            <person name="Chiba K."/>
            <person name="Tadenuma H."/>
            <person name="Matsumoto M."/>
            <person name="Takahashi K."/>
            <person name="Katada T."/>
            <person name="Hoshi M."/>
        </authorList>
    </citation>
    <scope>NUCLEOTIDE SEQUENCE [MRNA]</scope>
    <scope>PARTIAL PROTEIN SEQUENCE</scope>
    <source>
        <tissue>Ovary</tissue>
    </source>
</reference>